<reference key="1">
    <citation type="journal article" date="2001" name="J. Bacteriol.">
        <title>Genome of the bacterium Streptococcus pneumoniae strain R6.</title>
        <authorList>
            <person name="Hoskins J."/>
            <person name="Alborn W.E. Jr."/>
            <person name="Arnold J."/>
            <person name="Blaszczak L.C."/>
            <person name="Burgett S."/>
            <person name="DeHoff B.S."/>
            <person name="Estrem S.T."/>
            <person name="Fritz L."/>
            <person name="Fu D.-J."/>
            <person name="Fuller W."/>
            <person name="Geringer C."/>
            <person name="Gilmour R."/>
            <person name="Glass J.S."/>
            <person name="Khoja H."/>
            <person name="Kraft A.R."/>
            <person name="Lagace R.E."/>
            <person name="LeBlanc D.J."/>
            <person name="Lee L.N."/>
            <person name="Lefkowitz E.J."/>
            <person name="Lu J."/>
            <person name="Matsushima P."/>
            <person name="McAhren S.M."/>
            <person name="McHenney M."/>
            <person name="McLeaster K."/>
            <person name="Mundy C.W."/>
            <person name="Nicas T.I."/>
            <person name="Norris F.H."/>
            <person name="O'Gara M."/>
            <person name="Peery R.B."/>
            <person name="Robertson G.T."/>
            <person name="Rockey P."/>
            <person name="Sun P.-M."/>
            <person name="Winkler M.E."/>
            <person name="Yang Y."/>
            <person name="Young-Bellido M."/>
            <person name="Zhao G."/>
            <person name="Zook C.A."/>
            <person name="Baltz R.H."/>
            <person name="Jaskunas S.R."/>
            <person name="Rosteck P.R. Jr."/>
            <person name="Skatrud P.L."/>
            <person name="Glass J.I."/>
        </authorList>
    </citation>
    <scope>NUCLEOTIDE SEQUENCE [LARGE SCALE GENOMIC DNA]</scope>
    <source>
        <strain>ATCC BAA-255 / R6</strain>
    </source>
</reference>
<keyword id="KW-0963">Cytoplasm</keyword>
<keyword id="KW-0489">Methyltransferase</keyword>
<keyword id="KW-1185">Reference proteome</keyword>
<keyword id="KW-0698">rRNA processing</keyword>
<keyword id="KW-0949">S-adenosyl-L-methionine</keyword>
<keyword id="KW-0808">Transferase</keyword>
<evidence type="ECO:0000255" key="1">
    <source>
        <dbReference type="HAMAP-Rule" id="MF_01007"/>
    </source>
</evidence>
<organism>
    <name type="scientific">Streptococcus pneumoniae (strain ATCC BAA-255 / R6)</name>
    <dbReference type="NCBI Taxonomy" id="171101"/>
    <lineage>
        <taxon>Bacteria</taxon>
        <taxon>Bacillati</taxon>
        <taxon>Bacillota</taxon>
        <taxon>Bacilli</taxon>
        <taxon>Lactobacillales</taxon>
        <taxon>Streptococcaceae</taxon>
        <taxon>Streptococcus</taxon>
    </lineage>
</organism>
<proteinExistence type="inferred from homology"/>
<sequence>MTKEFHHVTVLLHETIDMLDVKPEGIYVDATLGGAGHSEYLLSKLSEKGHLYAFDQDQNAIDNAQKRLAPYIEKGMVTFIKDNFRHLQARLREAGVQEIDGICYDLGVSSPQLDQRERGFSYKKDAPLDMRMNQDASLTAYEVVNHYDYHDLVRIFFKYGEDKFSKQIARKIEQAREVKPIETTTELAEIIKLVKPAKELKKKGHPAKQIFQAIRIEVNDELGAADESIQQAMDMLALDGRISVITFHSLEDRLTKQLFKEASTVEVPKGLPFIPDDLKPKMELVSRKPILPSAEELEANNRSHSAKLRVVRKIHK</sequence>
<feature type="chain" id="PRO_0000108720" description="Ribosomal RNA small subunit methyltransferase H">
    <location>
        <begin position="1"/>
        <end position="316"/>
    </location>
</feature>
<feature type="binding site" evidence="1">
    <location>
        <begin position="35"/>
        <end position="37"/>
    </location>
    <ligand>
        <name>S-adenosyl-L-methionine</name>
        <dbReference type="ChEBI" id="CHEBI:59789"/>
    </ligand>
</feature>
<feature type="binding site" evidence="1">
    <location>
        <position position="55"/>
    </location>
    <ligand>
        <name>S-adenosyl-L-methionine</name>
        <dbReference type="ChEBI" id="CHEBI:59789"/>
    </ligand>
</feature>
<feature type="binding site" evidence="1">
    <location>
        <position position="84"/>
    </location>
    <ligand>
        <name>S-adenosyl-L-methionine</name>
        <dbReference type="ChEBI" id="CHEBI:59789"/>
    </ligand>
</feature>
<feature type="binding site" evidence="1">
    <location>
        <position position="105"/>
    </location>
    <ligand>
        <name>S-adenosyl-L-methionine</name>
        <dbReference type="ChEBI" id="CHEBI:59789"/>
    </ligand>
</feature>
<feature type="binding site" evidence="1">
    <location>
        <position position="112"/>
    </location>
    <ligand>
        <name>S-adenosyl-L-methionine</name>
        <dbReference type="ChEBI" id="CHEBI:59789"/>
    </ligand>
</feature>
<accession>P59658</accession>
<gene>
    <name evidence="1" type="primary">rsmH</name>
    <name type="synonym">mraW</name>
    <name type="ordered locus">spr0302</name>
</gene>
<name>RSMH_STRR6</name>
<comment type="function">
    <text evidence="1">Specifically methylates the N4 position of cytidine in position 1402 (C1402) of 16S rRNA.</text>
</comment>
<comment type="catalytic activity">
    <reaction evidence="1">
        <text>cytidine(1402) in 16S rRNA + S-adenosyl-L-methionine = N(4)-methylcytidine(1402) in 16S rRNA + S-adenosyl-L-homocysteine + H(+)</text>
        <dbReference type="Rhea" id="RHEA:42928"/>
        <dbReference type="Rhea" id="RHEA-COMP:10286"/>
        <dbReference type="Rhea" id="RHEA-COMP:10287"/>
        <dbReference type="ChEBI" id="CHEBI:15378"/>
        <dbReference type="ChEBI" id="CHEBI:57856"/>
        <dbReference type="ChEBI" id="CHEBI:59789"/>
        <dbReference type="ChEBI" id="CHEBI:74506"/>
        <dbReference type="ChEBI" id="CHEBI:82748"/>
        <dbReference type="EC" id="2.1.1.199"/>
    </reaction>
</comment>
<comment type="subcellular location">
    <subcellularLocation>
        <location evidence="1">Cytoplasm</location>
    </subcellularLocation>
</comment>
<comment type="similarity">
    <text evidence="1">Belongs to the methyltransferase superfamily. RsmH family.</text>
</comment>
<dbReference type="EC" id="2.1.1.199" evidence="1"/>
<dbReference type="EMBL" id="AE007317">
    <property type="protein sequence ID" value="AAK99106.1"/>
    <property type="molecule type" value="Genomic_DNA"/>
</dbReference>
<dbReference type="RefSeq" id="NP_357896.1">
    <property type="nucleotide sequence ID" value="NC_003098.1"/>
</dbReference>
<dbReference type="RefSeq" id="WP_000159434.1">
    <property type="nucleotide sequence ID" value="NC_003098.1"/>
</dbReference>
<dbReference type="SMR" id="P59658"/>
<dbReference type="STRING" id="171101.spr0302"/>
<dbReference type="KEGG" id="spr:spr0302"/>
<dbReference type="PATRIC" id="fig|171101.6.peg.339"/>
<dbReference type="eggNOG" id="COG0275">
    <property type="taxonomic scope" value="Bacteria"/>
</dbReference>
<dbReference type="HOGENOM" id="CLU_038422_2_0_9"/>
<dbReference type="Proteomes" id="UP000000586">
    <property type="component" value="Chromosome"/>
</dbReference>
<dbReference type="GO" id="GO:0005737">
    <property type="term" value="C:cytoplasm"/>
    <property type="evidence" value="ECO:0000318"/>
    <property type="project" value="GO_Central"/>
</dbReference>
<dbReference type="GO" id="GO:0071424">
    <property type="term" value="F:rRNA (cytosine-N4-)-methyltransferase activity"/>
    <property type="evidence" value="ECO:0000318"/>
    <property type="project" value="GO_Central"/>
</dbReference>
<dbReference type="GO" id="GO:0070475">
    <property type="term" value="P:rRNA base methylation"/>
    <property type="evidence" value="ECO:0000318"/>
    <property type="project" value="GO_Central"/>
</dbReference>
<dbReference type="FunFam" id="1.10.150.170:FF:000001">
    <property type="entry name" value="Ribosomal RNA small subunit methyltransferase H"/>
    <property type="match status" value="1"/>
</dbReference>
<dbReference type="Gene3D" id="1.10.150.170">
    <property type="entry name" value="Putative methyltransferase TM0872, insert domain"/>
    <property type="match status" value="1"/>
</dbReference>
<dbReference type="Gene3D" id="3.40.50.150">
    <property type="entry name" value="Vaccinia Virus protein VP39"/>
    <property type="match status" value="1"/>
</dbReference>
<dbReference type="HAMAP" id="MF_01007">
    <property type="entry name" value="16SrRNA_methyltr_H"/>
    <property type="match status" value="1"/>
</dbReference>
<dbReference type="InterPro" id="IPR002903">
    <property type="entry name" value="RsmH"/>
</dbReference>
<dbReference type="InterPro" id="IPR023397">
    <property type="entry name" value="SAM-dep_MeTrfase_MraW_recog"/>
</dbReference>
<dbReference type="InterPro" id="IPR029063">
    <property type="entry name" value="SAM-dependent_MTases_sf"/>
</dbReference>
<dbReference type="NCBIfam" id="TIGR00006">
    <property type="entry name" value="16S rRNA (cytosine(1402)-N(4))-methyltransferase RsmH"/>
    <property type="match status" value="1"/>
</dbReference>
<dbReference type="PANTHER" id="PTHR11265:SF0">
    <property type="entry name" value="12S RRNA N4-METHYLCYTIDINE METHYLTRANSFERASE"/>
    <property type="match status" value="1"/>
</dbReference>
<dbReference type="PANTHER" id="PTHR11265">
    <property type="entry name" value="S-ADENOSYL-METHYLTRANSFERASE MRAW"/>
    <property type="match status" value="1"/>
</dbReference>
<dbReference type="Pfam" id="PF01795">
    <property type="entry name" value="Methyltransf_5"/>
    <property type="match status" value="1"/>
</dbReference>
<dbReference type="PIRSF" id="PIRSF004486">
    <property type="entry name" value="MraW"/>
    <property type="match status" value="1"/>
</dbReference>
<dbReference type="SUPFAM" id="SSF81799">
    <property type="entry name" value="Putative methyltransferase TM0872, insert domain"/>
    <property type="match status" value="1"/>
</dbReference>
<dbReference type="SUPFAM" id="SSF53335">
    <property type="entry name" value="S-adenosyl-L-methionine-dependent methyltransferases"/>
    <property type="match status" value="1"/>
</dbReference>
<protein>
    <recommendedName>
        <fullName evidence="1">Ribosomal RNA small subunit methyltransferase H</fullName>
        <ecNumber evidence="1">2.1.1.199</ecNumber>
    </recommendedName>
    <alternativeName>
        <fullName evidence="1">16S rRNA m(4)C1402 methyltransferase</fullName>
    </alternativeName>
    <alternativeName>
        <fullName evidence="1">rRNA (cytosine-N(4)-)-methyltransferase RsmH</fullName>
    </alternativeName>
</protein>